<organism>
    <name type="scientific">Shigella flexneri</name>
    <dbReference type="NCBI Taxonomy" id="623"/>
    <lineage>
        <taxon>Bacteria</taxon>
        <taxon>Pseudomonadati</taxon>
        <taxon>Pseudomonadota</taxon>
        <taxon>Gammaproteobacteria</taxon>
        <taxon>Enterobacterales</taxon>
        <taxon>Enterobacteriaceae</taxon>
        <taxon>Shigella</taxon>
    </lineage>
</organism>
<dbReference type="EC" id="2.3.1.16" evidence="1"/>
<dbReference type="EMBL" id="AE005674">
    <property type="protein sequence ID" value="AAN45356.1"/>
    <property type="molecule type" value="Genomic_DNA"/>
</dbReference>
<dbReference type="EMBL" id="AE014073">
    <property type="protein sequence ID" value="AAP18842.1"/>
    <property type="molecule type" value="Genomic_DNA"/>
</dbReference>
<dbReference type="RefSeq" id="NP_709649.1">
    <property type="nucleotide sequence ID" value="NC_004337.2"/>
</dbReference>
<dbReference type="RefSeq" id="WP_000438720.1">
    <property type="nucleotide sequence ID" value="NZ_UIPM01000042.1"/>
</dbReference>
<dbReference type="SMR" id="Q83PG2"/>
<dbReference type="STRING" id="198214.SF3921"/>
<dbReference type="PaxDb" id="198214-SF3921"/>
<dbReference type="GeneID" id="1026914"/>
<dbReference type="KEGG" id="sfl:SF3921"/>
<dbReference type="KEGG" id="sfx:S3831"/>
<dbReference type="PATRIC" id="fig|198214.7.peg.4621"/>
<dbReference type="HOGENOM" id="CLU_031026_2_3_6"/>
<dbReference type="UniPathway" id="UPA00659"/>
<dbReference type="Proteomes" id="UP000001006">
    <property type="component" value="Chromosome"/>
</dbReference>
<dbReference type="Proteomes" id="UP000002673">
    <property type="component" value="Chromosome"/>
</dbReference>
<dbReference type="GO" id="GO:0005737">
    <property type="term" value="C:cytoplasm"/>
    <property type="evidence" value="ECO:0007669"/>
    <property type="project" value="UniProtKB-SubCell"/>
</dbReference>
<dbReference type="GO" id="GO:0003988">
    <property type="term" value="F:acetyl-CoA C-acyltransferase activity"/>
    <property type="evidence" value="ECO:0007669"/>
    <property type="project" value="UniProtKB-UniRule"/>
</dbReference>
<dbReference type="GO" id="GO:0006635">
    <property type="term" value="P:fatty acid beta-oxidation"/>
    <property type="evidence" value="ECO:0007669"/>
    <property type="project" value="UniProtKB-UniRule"/>
</dbReference>
<dbReference type="GO" id="GO:0010124">
    <property type="term" value="P:phenylacetate catabolic process"/>
    <property type="evidence" value="ECO:0007669"/>
    <property type="project" value="TreeGrafter"/>
</dbReference>
<dbReference type="CDD" id="cd00751">
    <property type="entry name" value="thiolase"/>
    <property type="match status" value="1"/>
</dbReference>
<dbReference type="FunFam" id="3.40.47.10:FF:000010">
    <property type="entry name" value="Acetyl-CoA acetyltransferase (Thiolase)"/>
    <property type="match status" value="1"/>
</dbReference>
<dbReference type="Gene3D" id="3.40.47.10">
    <property type="match status" value="2"/>
</dbReference>
<dbReference type="HAMAP" id="MF_01620">
    <property type="entry name" value="FadA"/>
    <property type="match status" value="1"/>
</dbReference>
<dbReference type="InterPro" id="IPR012805">
    <property type="entry name" value="FadA"/>
</dbReference>
<dbReference type="InterPro" id="IPR002155">
    <property type="entry name" value="Thiolase"/>
</dbReference>
<dbReference type="InterPro" id="IPR016039">
    <property type="entry name" value="Thiolase-like"/>
</dbReference>
<dbReference type="InterPro" id="IPR050215">
    <property type="entry name" value="Thiolase-like_sf_Thiolase"/>
</dbReference>
<dbReference type="InterPro" id="IPR020615">
    <property type="entry name" value="Thiolase_acyl_enz_int_AS"/>
</dbReference>
<dbReference type="InterPro" id="IPR020610">
    <property type="entry name" value="Thiolase_AS"/>
</dbReference>
<dbReference type="InterPro" id="IPR020617">
    <property type="entry name" value="Thiolase_C"/>
</dbReference>
<dbReference type="InterPro" id="IPR020613">
    <property type="entry name" value="Thiolase_CS"/>
</dbReference>
<dbReference type="InterPro" id="IPR020616">
    <property type="entry name" value="Thiolase_N"/>
</dbReference>
<dbReference type="NCBIfam" id="TIGR01930">
    <property type="entry name" value="AcCoA-C-Actrans"/>
    <property type="match status" value="1"/>
</dbReference>
<dbReference type="NCBIfam" id="TIGR02445">
    <property type="entry name" value="fadA"/>
    <property type="match status" value="1"/>
</dbReference>
<dbReference type="NCBIfam" id="NF006510">
    <property type="entry name" value="PRK08947.1"/>
    <property type="match status" value="1"/>
</dbReference>
<dbReference type="PANTHER" id="PTHR43853:SF11">
    <property type="entry name" value="3-KETOACYL-COA THIOLASE FADA"/>
    <property type="match status" value="1"/>
</dbReference>
<dbReference type="PANTHER" id="PTHR43853">
    <property type="entry name" value="3-KETOACYL-COA THIOLASE, PEROXISOMAL"/>
    <property type="match status" value="1"/>
</dbReference>
<dbReference type="Pfam" id="PF02803">
    <property type="entry name" value="Thiolase_C"/>
    <property type="match status" value="1"/>
</dbReference>
<dbReference type="Pfam" id="PF00108">
    <property type="entry name" value="Thiolase_N"/>
    <property type="match status" value="1"/>
</dbReference>
<dbReference type="PIRSF" id="PIRSF000429">
    <property type="entry name" value="Ac-CoA_Ac_transf"/>
    <property type="match status" value="1"/>
</dbReference>
<dbReference type="SUPFAM" id="SSF53901">
    <property type="entry name" value="Thiolase-like"/>
    <property type="match status" value="2"/>
</dbReference>
<dbReference type="PROSITE" id="PS00098">
    <property type="entry name" value="THIOLASE_1"/>
    <property type="match status" value="1"/>
</dbReference>
<dbReference type="PROSITE" id="PS00737">
    <property type="entry name" value="THIOLASE_2"/>
    <property type="match status" value="1"/>
</dbReference>
<dbReference type="PROSITE" id="PS00099">
    <property type="entry name" value="THIOLASE_3"/>
    <property type="match status" value="1"/>
</dbReference>
<protein>
    <recommendedName>
        <fullName evidence="1">3-ketoacyl-CoA thiolase</fullName>
        <ecNumber evidence="1">2.3.1.16</ecNumber>
    </recommendedName>
    <alternativeName>
        <fullName evidence="1">Acetyl-CoA acyltransferase</fullName>
    </alternativeName>
    <alternativeName>
        <fullName evidence="1">Beta-ketothiolase</fullName>
    </alternativeName>
    <alternativeName>
        <fullName evidence="1">Fatty acid oxidation complex subunit beta</fullName>
    </alternativeName>
</protein>
<comment type="function">
    <text evidence="1">Catalyzes the final step of fatty acid oxidation in which acetyl-CoA is released and the CoA ester of a fatty acid two carbons shorter is formed. Involved in the aerobic and anaerobic degradation of long-chain fatty acids (By similarity).</text>
</comment>
<comment type="catalytic activity">
    <reaction evidence="1">
        <text>an acyl-CoA + acetyl-CoA = a 3-oxoacyl-CoA + CoA</text>
        <dbReference type="Rhea" id="RHEA:21564"/>
        <dbReference type="ChEBI" id="CHEBI:57287"/>
        <dbReference type="ChEBI" id="CHEBI:57288"/>
        <dbReference type="ChEBI" id="CHEBI:58342"/>
        <dbReference type="ChEBI" id="CHEBI:90726"/>
        <dbReference type="EC" id="2.3.1.16"/>
    </reaction>
</comment>
<comment type="pathway">
    <text evidence="1">Lipid metabolism; fatty acid beta-oxidation.</text>
</comment>
<comment type="subunit">
    <text evidence="1">Heterotetramer of two alpha chains (FadB) and two beta chains (FadA).</text>
</comment>
<comment type="subcellular location">
    <subcellularLocation>
        <location evidence="1">Cytoplasm</location>
    </subcellularLocation>
</comment>
<comment type="similarity">
    <text evidence="1">Belongs to the thiolase-like superfamily. Thiolase family.</text>
</comment>
<sequence>MEQVVIVDAIRTPMGRSKGGAFRNVRAEDLSAHLMRSLLARNPALEAAALDDIYWGCVQQTLEQGFNIARNAALLAEVPHSVPAVTVNRLCGSSMQALHDAARMIMTGDAQACLVGGVEHIGHVPMSHGVDFHPGLSRNVAKAAGMMGLTAEMLARMHGISREMQDAFAARSHARAWAATQSAAFKNEIIPTGGHDADGVLKQFNYDEVIRPETTVEALATLRPAFDPVNGTVTAGTSSALSDGAAAMLVMSESRAHELGLKPRARVRSMAVVGCDPSIMGYGPVPASKLALKKAGLSASDIGVFEMNEAFAAQILPCIKDLGLMEQIDEKINLNGGAIALGHPLGCSGARISTTLLNLMERKDVQFGLATMCIGLGQGIATVFERV</sequence>
<accession>Q83PG2</accession>
<accession>Q7BZD2</accession>
<gene>
    <name evidence="1" type="primary">fadA</name>
    <name type="ordered locus">SF3921</name>
    <name type="ordered locus">S3831</name>
</gene>
<feature type="chain" id="PRO_0000206393" description="3-ketoacyl-CoA thiolase">
    <location>
        <begin position="1"/>
        <end position="387"/>
    </location>
</feature>
<feature type="active site" description="Acyl-thioester intermediate" evidence="1">
    <location>
        <position position="91"/>
    </location>
</feature>
<feature type="active site" description="Proton acceptor" evidence="1">
    <location>
        <position position="343"/>
    </location>
</feature>
<feature type="active site" description="Proton acceptor" evidence="1">
    <location>
        <position position="373"/>
    </location>
</feature>
<reference key="1">
    <citation type="journal article" date="2002" name="Nucleic Acids Res.">
        <title>Genome sequence of Shigella flexneri 2a: insights into pathogenicity through comparison with genomes of Escherichia coli K12 and O157.</title>
        <authorList>
            <person name="Jin Q."/>
            <person name="Yuan Z."/>
            <person name="Xu J."/>
            <person name="Wang Y."/>
            <person name="Shen Y."/>
            <person name="Lu W."/>
            <person name="Wang J."/>
            <person name="Liu H."/>
            <person name="Yang J."/>
            <person name="Yang F."/>
            <person name="Zhang X."/>
            <person name="Zhang J."/>
            <person name="Yang G."/>
            <person name="Wu H."/>
            <person name="Qu D."/>
            <person name="Dong J."/>
            <person name="Sun L."/>
            <person name="Xue Y."/>
            <person name="Zhao A."/>
            <person name="Gao Y."/>
            <person name="Zhu J."/>
            <person name="Kan B."/>
            <person name="Ding K."/>
            <person name="Chen S."/>
            <person name="Cheng H."/>
            <person name="Yao Z."/>
            <person name="He B."/>
            <person name="Chen R."/>
            <person name="Ma D."/>
            <person name="Qiang B."/>
            <person name="Wen Y."/>
            <person name="Hou Y."/>
            <person name="Yu J."/>
        </authorList>
    </citation>
    <scope>NUCLEOTIDE SEQUENCE [LARGE SCALE GENOMIC DNA]</scope>
    <source>
        <strain>301 / Serotype 2a</strain>
    </source>
</reference>
<reference key="2">
    <citation type="journal article" date="2003" name="Infect. Immun.">
        <title>Complete genome sequence and comparative genomics of Shigella flexneri serotype 2a strain 2457T.</title>
        <authorList>
            <person name="Wei J."/>
            <person name="Goldberg M.B."/>
            <person name="Burland V."/>
            <person name="Venkatesan M.M."/>
            <person name="Deng W."/>
            <person name="Fournier G."/>
            <person name="Mayhew G.F."/>
            <person name="Plunkett G. III"/>
            <person name="Rose D.J."/>
            <person name="Darling A."/>
            <person name="Mau B."/>
            <person name="Perna N.T."/>
            <person name="Payne S.M."/>
            <person name="Runyen-Janecky L.J."/>
            <person name="Zhou S."/>
            <person name="Schwartz D.C."/>
            <person name="Blattner F.R."/>
        </authorList>
    </citation>
    <scope>NUCLEOTIDE SEQUENCE [LARGE SCALE GENOMIC DNA]</scope>
    <source>
        <strain>ATCC 700930 / 2457T / Serotype 2a</strain>
    </source>
</reference>
<name>FADA_SHIFL</name>
<keyword id="KW-0012">Acyltransferase</keyword>
<keyword id="KW-0963">Cytoplasm</keyword>
<keyword id="KW-0276">Fatty acid metabolism</keyword>
<keyword id="KW-0442">Lipid degradation</keyword>
<keyword id="KW-0443">Lipid metabolism</keyword>
<keyword id="KW-1185">Reference proteome</keyword>
<keyword id="KW-0808">Transferase</keyword>
<evidence type="ECO:0000255" key="1">
    <source>
        <dbReference type="HAMAP-Rule" id="MF_01620"/>
    </source>
</evidence>
<proteinExistence type="inferred from homology"/>